<feature type="chain" id="PRO_1000050752" description="Large ribosomal subunit protein bL35">
    <location>
        <begin position="1"/>
        <end position="66"/>
    </location>
</feature>
<feature type="region of interest" description="Disordered" evidence="2">
    <location>
        <begin position="20"/>
        <end position="41"/>
    </location>
</feature>
<feature type="compositionally biased region" description="Basic residues" evidence="2">
    <location>
        <begin position="27"/>
        <end position="41"/>
    </location>
</feature>
<proteinExistence type="inferred from homology"/>
<keyword id="KW-0687">Ribonucleoprotein</keyword>
<keyword id="KW-0689">Ribosomal protein</keyword>
<dbReference type="EMBL" id="CP000283">
    <property type="protein sequence ID" value="ABE37406.1"/>
    <property type="molecule type" value="Genomic_DNA"/>
</dbReference>
<dbReference type="SMR" id="Q13ET3"/>
<dbReference type="STRING" id="316057.RPD_0166"/>
<dbReference type="KEGG" id="rpd:RPD_0166"/>
<dbReference type="eggNOG" id="COG0291">
    <property type="taxonomic scope" value="Bacteria"/>
</dbReference>
<dbReference type="HOGENOM" id="CLU_169643_2_1_5"/>
<dbReference type="BioCyc" id="RPAL316057:RPD_RS00835-MONOMER"/>
<dbReference type="Proteomes" id="UP000001818">
    <property type="component" value="Chromosome"/>
</dbReference>
<dbReference type="GO" id="GO:0022625">
    <property type="term" value="C:cytosolic large ribosomal subunit"/>
    <property type="evidence" value="ECO:0007669"/>
    <property type="project" value="TreeGrafter"/>
</dbReference>
<dbReference type="GO" id="GO:0003735">
    <property type="term" value="F:structural constituent of ribosome"/>
    <property type="evidence" value="ECO:0007669"/>
    <property type="project" value="InterPro"/>
</dbReference>
<dbReference type="GO" id="GO:0006412">
    <property type="term" value="P:translation"/>
    <property type="evidence" value="ECO:0007669"/>
    <property type="project" value="UniProtKB-UniRule"/>
</dbReference>
<dbReference type="FunFam" id="4.10.410.60:FF:000001">
    <property type="entry name" value="50S ribosomal protein L35"/>
    <property type="match status" value="1"/>
</dbReference>
<dbReference type="Gene3D" id="4.10.410.60">
    <property type="match status" value="1"/>
</dbReference>
<dbReference type="HAMAP" id="MF_00514">
    <property type="entry name" value="Ribosomal_bL35"/>
    <property type="match status" value="1"/>
</dbReference>
<dbReference type="InterPro" id="IPR001706">
    <property type="entry name" value="Ribosomal_bL35"/>
</dbReference>
<dbReference type="InterPro" id="IPR021137">
    <property type="entry name" value="Ribosomal_bL35-like"/>
</dbReference>
<dbReference type="InterPro" id="IPR018265">
    <property type="entry name" value="Ribosomal_bL35_CS"/>
</dbReference>
<dbReference type="InterPro" id="IPR037229">
    <property type="entry name" value="Ribosomal_bL35_sf"/>
</dbReference>
<dbReference type="NCBIfam" id="TIGR00001">
    <property type="entry name" value="rpmI_bact"/>
    <property type="match status" value="1"/>
</dbReference>
<dbReference type="PANTHER" id="PTHR33343">
    <property type="entry name" value="54S RIBOSOMAL PROTEIN BL35M"/>
    <property type="match status" value="1"/>
</dbReference>
<dbReference type="PANTHER" id="PTHR33343:SF1">
    <property type="entry name" value="LARGE RIBOSOMAL SUBUNIT PROTEIN BL35M"/>
    <property type="match status" value="1"/>
</dbReference>
<dbReference type="Pfam" id="PF01632">
    <property type="entry name" value="Ribosomal_L35p"/>
    <property type="match status" value="1"/>
</dbReference>
<dbReference type="PRINTS" id="PR00064">
    <property type="entry name" value="RIBOSOMALL35"/>
</dbReference>
<dbReference type="SUPFAM" id="SSF143034">
    <property type="entry name" value="L35p-like"/>
    <property type="match status" value="1"/>
</dbReference>
<dbReference type="PROSITE" id="PS00936">
    <property type="entry name" value="RIBOSOMAL_L35"/>
    <property type="match status" value="1"/>
</dbReference>
<protein>
    <recommendedName>
        <fullName evidence="1">Large ribosomal subunit protein bL35</fullName>
    </recommendedName>
    <alternativeName>
        <fullName evidence="3">50S ribosomal protein L35</fullName>
    </alternativeName>
</protein>
<reference key="1">
    <citation type="submission" date="2006-03" db="EMBL/GenBank/DDBJ databases">
        <title>Complete sequence of Rhodopseudomonas palustris BisB5.</title>
        <authorList>
            <consortium name="US DOE Joint Genome Institute"/>
            <person name="Copeland A."/>
            <person name="Lucas S."/>
            <person name="Lapidus A."/>
            <person name="Barry K."/>
            <person name="Detter J.C."/>
            <person name="Glavina del Rio T."/>
            <person name="Hammon N."/>
            <person name="Israni S."/>
            <person name="Dalin E."/>
            <person name="Tice H."/>
            <person name="Pitluck S."/>
            <person name="Chain P."/>
            <person name="Malfatti S."/>
            <person name="Shin M."/>
            <person name="Vergez L."/>
            <person name="Schmutz J."/>
            <person name="Larimer F."/>
            <person name="Land M."/>
            <person name="Hauser L."/>
            <person name="Pelletier D.A."/>
            <person name="Kyrpides N."/>
            <person name="Lykidis A."/>
            <person name="Oda Y."/>
            <person name="Harwood C.S."/>
            <person name="Richardson P."/>
        </authorList>
    </citation>
    <scope>NUCLEOTIDE SEQUENCE [LARGE SCALE GENOMIC DNA]</scope>
    <source>
        <strain>BisB5</strain>
    </source>
</reference>
<name>RL35_RHOPS</name>
<accession>Q13ET3</accession>
<comment type="similarity">
    <text evidence="1">Belongs to the bacterial ribosomal protein bL35 family.</text>
</comment>
<evidence type="ECO:0000255" key="1">
    <source>
        <dbReference type="HAMAP-Rule" id="MF_00514"/>
    </source>
</evidence>
<evidence type="ECO:0000256" key="2">
    <source>
        <dbReference type="SAM" id="MobiDB-lite"/>
    </source>
</evidence>
<evidence type="ECO:0000305" key="3"/>
<organism>
    <name type="scientific">Rhodopseudomonas palustris (strain BisB5)</name>
    <dbReference type="NCBI Taxonomy" id="316057"/>
    <lineage>
        <taxon>Bacteria</taxon>
        <taxon>Pseudomonadati</taxon>
        <taxon>Pseudomonadota</taxon>
        <taxon>Alphaproteobacteria</taxon>
        <taxon>Hyphomicrobiales</taxon>
        <taxon>Nitrobacteraceae</taxon>
        <taxon>Rhodopseudomonas</taxon>
    </lineage>
</organism>
<gene>
    <name evidence="1" type="primary">rpmI</name>
    <name type="ordered locus">RPD_0166</name>
</gene>
<sequence>MPKLKTKSGAKKRFKVTATGKVMSAQRGKRHGMIKRTKKQIRQLRGTRVIFKTDGDNIKKYFLPNA</sequence>